<organism>
    <name type="scientific">Rhodospirillum centenum (strain ATCC 51521 / SW)</name>
    <dbReference type="NCBI Taxonomy" id="414684"/>
    <lineage>
        <taxon>Bacteria</taxon>
        <taxon>Pseudomonadati</taxon>
        <taxon>Pseudomonadota</taxon>
        <taxon>Alphaproteobacteria</taxon>
        <taxon>Rhodospirillales</taxon>
        <taxon>Rhodospirillaceae</taxon>
        <taxon>Rhodospirillum</taxon>
    </lineage>
</organism>
<evidence type="ECO:0000255" key="1">
    <source>
        <dbReference type="HAMAP-Rule" id="MF_01350"/>
    </source>
</evidence>
<reference key="1">
    <citation type="submission" date="2007-03" db="EMBL/GenBank/DDBJ databases">
        <title>Genome sequence of Rhodospirillum centenum.</title>
        <authorList>
            <person name="Touchman J.W."/>
            <person name="Bauer C."/>
            <person name="Blankenship R.E."/>
        </authorList>
    </citation>
    <scope>NUCLEOTIDE SEQUENCE [LARGE SCALE GENOMIC DNA]</scope>
    <source>
        <strain>ATCC 51521 / SW</strain>
    </source>
</reference>
<keyword id="KW-0997">Cell inner membrane</keyword>
<keyword id="KW-1003">Cell membrane</keyword>
<keyword id="KW-0472">Membrane</keyword>
<keyword id="KW-0520">NAD</keyword>
<keyword id="KW-0874">Quinone</keyword>
<keyword id="KW-1185">Reference proteome</keyword>
<keyword id="KW-1278">Translocase</keyword>
<keyword id="KW-0812">Transmembrane</keyword>
<keyword id="KW-1133">Transmembrane helix</keyword>
<keyword id="KW-0830">Ubiquinone</keyword>
<proteinExistence type="inferred from homology"/>
<comment type="function">
    <text evidence="1">NDH-1 shuttles electrons from NADH, via FMN and iron-sulfur (Fe-S) centers, to quinones in the respiratory chain. The immediate electron acceptor for the enzyme in this species is believed to be ubiquinone. Couples the redox reaction to proton translocation (for every two electrons transferred, four hydrogen ions are translocated across the cytoplasmic membrane), and thus conserves the redox energy in a proton gradient. This subunit may bind ubiquinone.</text>
</comment>
<comment type="catalytic activity">
    <reaction evidence="1">
        <text>a quinone + NADH + 5 H(+)(in) = a quinol + NAD(+) + 4 H(+)(out)</text>
        <dbReference type="Rhea" id="RHEA:57888"/>
        <dbReference type="ChEBI" id="CHEBI:15378"/>
        <dbReference type="ChEBI" id="CHEBI:24646"/>
        <dbReference type="ChEBI" id="CHEBI:57540"/>
        <dbReference type="ChEBI" id="CHEBI:57945"/>
        <dbReference type="ChEBI" id="CHEBI:132124"/>
    </reaction>
</comment>
<comment type="subunit">
    <text evidence="1">NDH-1 is composed of 14 different subunits. Subunits NuoA, H, J, K, L, M, N constitute the membrane sector of the complex.</text>
</comment>
<comment type="subcellular location">
    <subcellularLocation>
        <location evidence="1">Cell inner membrane</location>
        <topology evidence="1">Multi-pass membrane protein</topology>
    </subcellularLocation>
</comment>
<comment type="similarity">
    <text evidence="1">Belongs to the complex I subunit 1 family.</text>
</comment>
<name>NUOH_RHOCS</name>
<feature type="chain" id="PRO_1000143616" description="NADH-quinone oxidoreductase subunit H">
    <location>
        <begin position="1"/>
        <end position="336"/>
    </location>
</feature>
<feature type="transmembrane region" description="Helical" evidence="1">
    <location>
        <begin position="14"/>
        <end position="34"/>
    </location>
</feature>
<feature type="transmembrane region" description="Helical" evidence="1">
    <location>
        <begin position="82"/>
        <end position="102"/>
    </location>
</feature>
<feature type="transmembrane region" description="Helical" evidence="1">
    <location>
        <begin position="115"/>
        <end position="135"/>
    </location>
</feature>
<feature type="transmembrane region" description="Helical" evidence="1">
    <location>
        <begin position="161"/>
        <end position="181"/>
    </location>
</feature>
<feature type="transmembrane region" description="Helical" evidence="1">
    <location>
        <begin position="186"/>
        <end position="206"/>
    </location>
</feature>
<feature type="transmembrane region" description="Helical" evidence="1">
    <location>
        <begin position="247"/>
        <end position="267"/>
    </location>
</feature>
<feature type="transmembrane region" description="Helical" evidence="1">
    <location>
        <begin position="273"/>
        <end position="293"/>
    </location>
</feature>
<feature type="transmembrane region" description="Helical" evidence="1">
    <location>
        <begin position="312"/>
        <end position="332"/>
    </location>
</feature>
<accession>B6ISX4</accession>
<sequence>MADIWTDYGVPGAIIVAQILALMVPILVSVAFLVYAERKVLGLMQLRQGPNMVGPWGILQSFADALKMIGKETIIPAGANRIIFLAAPMLTMMLALAAWAVIPFGEGLVISDINVGILYLLAISSQGVYGIIMAGWASNSKYAFLGGLRSAAQMVSYEVSIGLVIITVLLCVGSLNLSDVVEAQKTVWFAIPLLPMFVIFFISALAETNRAPFDLPEGESELVGGFHTEYSGMAFGLFFLGEYANMILMSAMTSVLFLGGWLPPLDVAPLNWVPGPIWFILKICFCLFLFVWVRATVPRYRYDQLMRLGWKVFLPFSLVWVILTAGVLVTFDWLPK</sequence>
<dbReference type="EC" id="7.1.1.-" evidence="1"/>
<dbReference type="EMBL" id="CP000613">
    <property type="protein sequence ID" value="ACI98645.1"/>
    <property type="molecule type" value="Genomic_DNA"/>
</dbReference>
<dbReference type="RefSeq" id="WP_012566433.1">
    <property type="nucleotide sequence ID" value="NC_011420.2"/>
</dbReference>
<dbReference type="SMR" id="B6ISX4"/>
<dbReference type="STRING" id="414684.RC1_1233"/>
<dbReference type="KEGG" id="rce:RC1_1233"/>
<dbReference type="eggNOG" id="COG1005">
    <property type="taxonomic scope" value="Bacteria"/>
</dbReference>
<dbReference type="HOGENOM" id="CLU_015134_0_1_5"/>
<dbReference type="OrthoDB" id="9803734at2"/>
<dbReference type="Proteomes" id="UP000001591">
    <property type="component" value="Chromosome"/>
</dbReference>
<dbReference type="GO" id="GO:0005886">
    <property type="term" value="C:plasma membrane"/>
    <property type="evidence" value="ECO:0007669"/>
    <property type="project" value="UniProtKB-SubCell"/>
</dbReference>
<dbReference type="GO" id="GO:0003954">
    <property type="term" value="F:NADH dehydrogenase activity"/>
    <property type="evidence" value="ECO:0007669"/>
    <property type="project" value="TreeGrafter"/>
</dbReference>
<dbReference type="GO" id="GO:0016655">
    <property type="term" value="F:oxidoreductase activity, acting on NAD(P)H, quinone or similar compound as acceptor"/>
    <property type="evidence" value="ECO:0007669"/>
    <property type="project" value="UniProtKB-UniRule"/>
</dbReference>
<dbReference type="GO" id="GO:0048038">
    <property type="term" value="F:quinone binding"/>
    <property type="evidence" value="ECO:0007669"/>
    <property type="project" value="UniProtKB-KW"/>
</dbReference>
<dbReference type="GO" id="GO:0009060">
    <property type="term" value="P:aerobic respiration"/>
    <property type="evidence" value="ECO:0007669"/>
    <property type="project" value="TreeGrafter"/>
</dbReference>
<dbReference type="HAMAP" id="MF_01350">
    <property type="entry name" value="NDH1_NuoH"/>
    <property type="match status" value="1"/>
</dbReference>
<dbReference type="InterPro" id="IPR001694">
    <property type="entry name" value="NADH_UbQ_OxRdtase_su1/FPO"/>
</dbReference>
<dbReference type="InterPro" id="IPR018086">
    <property type="entry name" value="NADH_UbQ_OxRdtase_su1_CS"/>
</dbReference>
<dbReference type="NCBIfam" id="NF004741">
    <property type="entry name" value="PRK06076.1-2"/>
    <property type="match status" value="1"/>
</dbReference>
<dbReference type="NCBIfam" id="NF004745">
    <property type="entry name" value="PRK06076.1-6"/>
    <property type="match status" value="1"/>
</dbReference>
<dbReference type="PANTHER" id="PTHR11432">
    <property type="entry name" value="NADH DEHYDROGENASE SUBUNIT 1"/>
    <property type="match status" value="1"/>
</dbReference>
<dbReference type="PANTHER" id="PTHR11432:SF3">
    <property type="entry name" value="NADH-UBIQUINONE OXIDOREDUCTASE CHAIN 1"/>
    <property type="match status" value="1"/>
</dbReference>
<dbReference type="Pfam" id="PF00146">
    <property type="entry name" value="NADHdh"/>
    <property type="match status" value="1"/>
</dbReference>
<dbReference type="PROSITE" id="PS00667">
    <property type="entry name" value="COMPLEX1_ND1_1"/>
    <property type="match status" value="1"/>
</dbReference>
<dbReference type="PROSITE" id="PS00668">
    <property type="entry name" value="COMPLEX1_ND1_2"/>
    <property type="match status" value="1"/>
</dbReference>
<gene>
    <name evidence="1" type="primary">nuoH</name>
    <name type="ordered locus">RC1_1233</name>
</gene>
<protein>
    <recommendedName>
        <fullName evidence="1">NADH-quinone oxidoreductase subunit H</fullName>
        <ecNumber evidence="1">7.1.1.-</ecNumber>
    </recommendedName>
    <alternativeName>
        <fullName evidence="1">NADH dehydrogenase I subunit H</fullName>
    </alternativeName>
    <alternativeName>
        <fullName evidence="1">NDH-1 subunit H</fullName>
    </alternativeName>
</protein>